<proteinExistence type="inferred from homology"/>
<protein>
    <recommendedName>
        <fullName evidence="1">Cell division protein ZapB</fullName>
    </recommendedName>
</protein>
<reference key="1">
    <citation type="journal article" date="2007" name="PLoS Genet.">
        <title>The complete genome sequence of Yersinia pseudotuberculosis IP31758, the causative agent of Far East scarlet-like fever.</title>
        <authorList>
            <person name="Eppinger M."/>
            <person name="Rosovitz M.J."/>
            <person name="Fricke W.F."/>
            <person name="Rasko D.A."/>
            <person name="Kokorina G."/>
            <person name="Fayolle C."/>
            <person name="Lindler L.E."/>
            <person name="Carniel E."/>
            <person name="Ravel J."/>
        </authorList>
    </citation>
    <scope>NUCLEOTIDE SEQUENCE [LARGE SCALE GENOMIC DNA]</scope>
    <source>
        <strain>IP 31758</strain>
    </source>
</reference>
<gene>
    <name evidence="1" type="primary">zapB</name>
    <name type="ordered locus">YpsIP31758_0103</name>
</gene>
<organism>
    <name type="scientific">Yersinia pseudotuberculosis serotype O:1b (strain IP 31758)</name>
    <dbReference type="NCBI Taxonomy" id="349747"/>
    <lineage>
        <taxon>Bacteria</taxon>
        <taxon>Pseudomonadati</taxon>
        <taxon>Pseudomonadota</taxon>
        <taxon>Gammaproteobacteria</taxon>
        <taxon>Enterobacterales</taxon>
        <taxon>Yersiniaceae</taxon>
        <taxon>Yersinia</taxon>
    </lineage>
</organism>
<comment type="function">
    <text evidence="1">Non-essential, abundant cell division factor that is required for proper Z-ring formation. It is recruited early to the divisome by direct interaction with FtsZ, stimulating Z-ring assembly and thereby promoting cell division earlier in the cell cycle. Its recruitment to the Z-ring requires functional FtsA or ZipA.</text>
</comment>
<comment type="subunit">
    <text evidence="1">Homodimer. The ends of the coiled-coil dimer bind to each other, forming polymers. Interacts with FtsZ.</text>
</comment>
<comment type="subcellular location">
    <subcellularLocation>
        <location>Cytoplasm</location>
    </subcellularLocation>
    <text evidence="1">Localizes to the septum at mid-cell, in a FtsZ-like pattern.</text>
</comment>
<comment type="similarity">
    <text evidence="1">Belongs to the ZapB family.</text>
</comment>
<feature type="chain" id="PRO_0000333951" description="Cell division protein ZapB">
    <location>
        <begin position="1"/>
        <end position="79"/>
    </location>
</feature>
<feature type="coiled-coil region" evidence="1">
    <location>
        <begin position="6"/>
        <end position="78"/>
    </location>
</feature>
<name>ZAPB_YERP3</name>
<keyword id="KW-0131">Cell cycle</keyword>
<keyword id="KW-0132">Cell division</keyword>
<keyword id="KW-0175">Coiled coil</keyword>
<keyword id="KW-0963">Cytoplasm</keyword>
<keyword id="KW-0717">Septation</keyword>
<evidence type="ECO:0000255" key="1">
    <source>
        <dbReference type="HAMAP-Rule" id="MF_01196"/>
    </source>
</evidence>
<accession>A7FCX5</accession>
<sequence>MSFEVFEKLEVKVQQAIDTITLLQMEIEELKEKNNTLTQEVQDAAGSREALVRENEQLKQEQHVWQDRLRALLGKMEEV</sequence>
<dbReference type="EMBL" id="CP000720">
    <property type="protein sequence ID" value="ABS48852.1"/>
    <property type="molecule type" value="Genomic_DNA"/>
</dbReference>
<dbReference type="RefSeq" id="WP_002208953.1">
    <property type="nucleotide sequence ID" value="NC_009708.1"/>
</dbReference>
<dbReference type="SMR" id="A7FCX5"/>
<dbReference type="GeneID" id="96663567"/>
<dbReference type="KEGG" id="ypi:YpsIP31758_0103"/>
<dbReference type="HOGENOM" id="CLU_171174_2_0_6"/>
<dbReference type="Proteomes" id="UP000002412">
    <property type="component" value="Chromosome"/>
</dbReference>
<dbReference type="GO" id="GO:0005737">
    <property type="term" value="C:cytoplasm"/>
    <property type="evidence" value="ECO:0007669"/>
    <property type="project" value="UniProtKB-SubCell"/>
</dbReference>
<dbReference type="GO" id="GO:0000917">
    <property type="term" value="P:division septum assembly"/>
    <property type="evidence" value="ECO:0007669"/>
    <property type="project" value="UniProtKB-KW"/>
</dbReference>
<dbReference type="GO" id="GO:0043093">
    <property type="term" value="P:FtsZ-dependent cytokinesis"/>
    <property type="evidence" value="ECO:0007669"/>
    <property type="project" value="UniProtKB-UniRule"/>
</dbReference>
<dbReference type="Gene3D" id="1.20.5.340">
    <property type="match status" value="1"/>
</dbReference>
<dbReference type="HAMAP" id="MF_01196">
    <property type="entry name" value="ZapB"/>
    <property type="match status" value="1"/>
</dbReference>
<dbReference type="InterPro" id="IPR009252">
    <property type="entry name" value="Cell_div_ZapB"/>
</dbReference>
<dbReference type="NCBIfam" id="NF011951">
    <property type="entry name" value="PRK15422.1"/>
    <property type="match status" value="1"/>
</dbReference>
<dbReference type="Pfam" id="PF06005">
    <property type="entry name" value="ZapB"/>
    <property type="match status" value="1"/>
</dbReference>